<proteinExistence type="inferred from homology"/>
<reference key="1">
    <citation type="journal article" date="2006" name="PLoS Genet.">
        <title>Genome sequence of Rickettsia bellii illuminates the role of amoebae in gene exchanges between intracellular pathogens.</title>
        <authorList>
            <person name="Ogata H."/>
            <person name="La Scola B."/>
            <person name="Audic S."/>
            <person name="Renesto P."/>
            <person name="Blanc G."/>
            <person name="Robert C."/>
            <person name="Fournier P.-E."/>
            <person name="Claverie J.-M."/>
            <person name="Raoult D."/>
        </authorList>
    </citation>
    <scope>NUCLEOTIDE SEQUENCE [LARGE SCALE GENOMIC DNA]</scope>
    <source>
        <strain>RML369-C</strain>
    </source>
</reference>
<evidence type="ECO:0000255" key="1">
    <source>
        <dbReference type="HAMAP-Rule" id="MF_00054"/>
    </source>
</evidence>
<feature type="chain" id="PRO_0000263497" description="Elongation factor G">
    <location>
        <begin position="1"/>
        <end position="698"/>
    </location>
</feature>
<feature type="domain" description="tr-type G">
    <location>
        <begin position="6"/>
        <end position="281"/>
    </location>
</feature>
<feature type="binding site" evidence="1">
    <location>
        <begin position="15"/>
        <end position="22"/>
    </location>
    <ligand>
        <name>GTP</name>
        <dbReference type="ChEBI" id="CHEBI:37565"/>
    </ligand>
</feature>
<feature type="binding site" evidence="1">
    <location>
        <begin position="79"/>
        <end position="83"/>
    </location>
    <ligand>
        <name>GTP</name>
        <dbReference type="ChEBI" id="CHEBI:37565"/>
    </ligand>
</feature>
<feature type="binding site" evidence="1">
    <location>
        <begin position="133"/>
        <end position="136"/>
    </location>
    <ligand>
        <name>GTP</name>
        <dbReference type="ChEBI" id="CHEBI:37565"/>
    </ligand>
</feature>
<dbReference type="EMBL" id="CP000087">
    <property type="protein sequence ID" value="ABE05241.1"/>
    <property type="molecule type" value="Genomic_DNA"/>
</dbReference>
<dbReference type="RefSeq" id="WP_011477819.1">
    <property type="nucleotide sequence ID" value="NC_007940.1"/>
</dbReference>
<dbReference type="SMR" id="Q1RHC3"/>
<dbReference type="KEGG" id="rbe:RBE_1160"/>
<dbReference type="eggNOG" id="COG0480">
    <property type="taxonomic scope" value="Bacteria"/>
</dbReference>
<dbReference type="HOGENOM" id="CLU_002794_4_1_5"/>
<dbReference type="OrthoDB" id="9802948at2"/>
<dbReference type="Proteomes" id="UP000001951">
    <property type="component" value="Chromosome"/>
</dbReference>
<dbReference type="GO" id="GO:0005737">
    <property type="term" value="C:cytoplasm"/>
    <property type="evidence" value="ECO:0007669"/>
    <property type="project" value="UniProtKB-SubCell"/>
</dbReference>
<dbReference type="GO" id="GO:0005525">
    <property type="term" value="F:GTP binding"/>
    <property type="evidence" value="ECO:0007669"/>
    <property type="project" value="UniProtKB-UniRule"/>
</dbReference>
<dbReference type="GO" id="GO:0003924">
    <property type="term" value="F:GTPase activity"/>
    <property type="evidence" value="ECO:0007669"/>
    <property type="project" value="InterPro"/>
</dbReference>
<dbReference type="GO" id="GO:0003746">
    <property type="term" value="F:translation elongation factor activity"/>
    <property type="evidence" value="ECO:0007669"/>
    <property type="project" value="UniProtKB-UniRule"/>
</dbReference>
<dbReference type="GO" id="GO:0032790">
    <property type="term" value="P:ribosome disassembly"/>
    <property type="evidence" value="ECO:0007669"/>
    <property type="project" value="TreeGrafter"/>
</dbReference>
<dbReference type="CDD" id="cd01886">
    <property type="entry name" value="EF-G"/>
    <property type="match status" value="1"/>
</dbReference>
<dbReference type="CDD" id="cd16262">
    <property type="entry name" value="EFG_III"/>
    <property type="match status" value="1"/>
</dbReference>
<dbReference type="CDD" id="cd01434">
    <property type="entry name" value="EFG_mtEFG1_IV"/>
    <property type="match status" value="1"/>
</dbReference>
<dbReference type="CDD" id="cd03713">
    <property type="entry name" value="EFG_mtEFG_C"/>
    <property type="match status" value="1"/>
</dbReference>
<dbReference type="CDD" id="cd04088">
    <property type="entry name" value="EFG_mtEFG_II"/>
    <property type="match status" value="1"/>
</dbReference>
<dbReference type="FunFam" id="2.40.30.10:FF:000006">
    <property type="entry name" value="Elongation factor G"/>
    <property type="match status" value="1"/>
</dbReference>
<dbReference type="FunFam" id="3.30.230.10:FF:000003">
    <property type="entry name" value="Elongation factor G"/>
    <property type="match status" value="1"/>
</dbReference>
<dbReference type="FunFam" id="3.30.70.240:FF:000001">
    <property type="entry name" value="Elongation factor G"/>
    <property type="match status" value="1"/>
</dbReference>
<dbReference type="FunFam" id="3.30.70.870:FF:000001">
    <property type="entry name" value="Elongation factor G"/>
    <property type="match status" value="1"/>
</dbReference>
<dbReference type="FunFam" id="3.40.50.300:FF:000029">
    <property type="entry name" value="Elongation factor G"/>
    <property type="match status" value="1"/>
</dbReference>
<dbReference type="Gene3D" id="3.30.230.10">
    <property type="match status" value="1"/>
</dbReference>
<dbReference type="Gene3D" id="3.30.70.240">
    <property type="match status" value="1"/>
</dbReference>
<dbReference type="Gene3D" id="3.30.70.870">
    <property type="entry name" value="Elongation Factor G (Translational Gtpase), domain 3"/>
    <property type="match status" value="1"/>
</dbReference>
<dbReference type="Gene3D" id="3.40.50.300">
    <property type="entry name" value="P-loop containing nucleotide triphosphate hydrolases"/>
    <property type="match status" value="1"/>
</dbReference>
<dbReference type="Gene3D" id="2.40.30.10">
    <property type="entry name" value="Translation factors"/>
    <property type="match status" value="1"/>
</dbReference>
<dbReference type="HAMAP" id="MF_00054_B">
    <property type="entry name" value="EF_G_EF_2_B"/>
    <property type="match status" value="1"/>
</dbReference>
<dbReference type="InterPro" id="IPR053905">
    <property type="entry name" value="EF-G-like_DII"/>
</dbReference>
<dbReference type="InterPro" id="IPR041095">
    <property type="entry name" value="EFG_II"/>
</dbReference>
<dbReference type="InterPro" id="IPR009022">
    <property type="entry name" value="EFG_III"/>
</dbReference>
<dbReference type="InterPro" id="IPR035647">
    <property type="entry name" value="EFG_III/V"/>
</dbReference>
<dbReference type="InterPro" id="IPR047872">
    <property type="entry name" value="EFG_IV"/>
</dbReference>
<dbReference type="InterPro" id="IPR035649">
    <property type="entry name" value="EFG_V"/>
</dbReference>
<dbReference type="InterPro" id="IPR000640">
    <property type="entry name" value="EFG_V-like"/>
</dbReference>
<dbReference type="InterPro" id="IPR031157">
    <property type="entry name" value="G_TR_CS"/>
</dbReference>
<dbReference type="InterPro" id="IPR027417">
    <property type="entry name" value="P-loop_NTPase"/>
</dbReference>
<dbReference type="InterPro" id="IPR020568">
    <property type="entry name" value="Ribosomal_Su5_D2-typ_SF"/>
</dbReference>
<dbReference type="InterPro" id="IPR014721">
    <property type="entry name" value="Ribsml_uS5_D2-typ_fold_subgr"/>
</dbReference>
<dbReference type="InterPro" id="IPR005225">
    <property type="entry name" value="Small_GTP-bd"/>
</dbReference>
<dbReference type="InterPro" id="IPR000795">
    <property type="entry name" value="T_Tr_GTP-bd_dom"/>
</dbReference>
<dbReference type="InterPro" id="IPR009000">
    <property type="entry name" value="Transl_B-barrel_sf"/>
</dbReference>
<dbReference type="InterPro" id="IPR004540">
    <property type="entry name" value="Transl_elong_EFG/EF2"/>
</dbReference>
<dbReference type="InterPro" id="IPR005517">
    <property type="entry name" value="Transl_elong_EFG/EF2_IV"/>
</dbReference>
<dbReference type="NCBIfam" id="TIGR00484">
    <property type="entry name" value="EF-G"/>
    <property type="match status" value="1"/>
</dbReference>
<dbReference type="NCBIfam" id="NF009381">
    <property type="entry name" value="PRK12740.1-5"/>
    <property type="match status" value="1"/>
</dbReference>
<dbReference type="NCBIfam" id="TIGR00231">
    <property type="entry name" value="small_GTP"/>
    <property type="match status" value="1"/>
</dbReference>
<dbReference type="PANTHER" id="PTHR43261:SF1">
    <property type="entry name" value="RIBOSOME-RELEASING FACTOR 2, MITOCHONDRIAL"/>
    <property type="match status" value="1"/>
</dbReference>
<dbReference type="PANTHER" id="PTHR43261">
    <property type="entry name" value="TRANSLATION ELONGATION FACTOR G-RELATED"/>
    <property type="match status" value="1"/>
</dbReference>
<dbReference type="Pfam" id="PF22042">
    <property type="entry name" value="EF-G_D2"/>
    <property type="match status" value="1"/>
</dbReference>
<dbReference type="Pfam" id="PF00679">
    <property type="entry name" value="EFG_C"/>
    <property type="match status" value="1"/>
</dbReference>
<dbReference type="Pfam" id="PF14492">
    <property type="entry name" value="EFG_III"/>
    <property type="match status" value="1"/>
</dbReference>
<dbReference type="Pfam" id="PF03764">
    <property type="entry name" value="EFG_IV"/>
    <property type="match status" value="1"/>
</dbReference>
<dbReference type="Pfam" id="PF00009">
    <property type="entry name" value="GTP_EFTU"/>
    <property type="match status" value="1"/>
</dbReference>
<dbReference type="PRINTS" id="PR00315">
    <property type="entry name" value="ELONGATNFCT"/>
</dbReference>
<dbReference type="SMART" id="SM00838">
    <property type="entry name" value="EFG_C"/>
    <property type="match status" value="1"/>
</dbReference>
<dbReference type="SMART" id="SM00889">
    <property type="entry name" value="EFG_IV"/>
    <property type="match status" value="1"/>
</dbReference>
<dbReference type="SUPFAM" id="SSF54980">
    <property type="entry name" value="EF-G C-terminal domain-like"/>
    <property type="match status" value="2"/>
</dbReference>
<dbReference type="SUPFAM" id="SSF52540">
    <property type="entry name" value="P-loop containing nucleoside triphosphate hydrolases"/>
    <property type="match status" value="1"/>
</dbReference>
<dbReference type="SUPFAM" id="SSF54211">
    <property type="entry name" value="Ribosomal protein S5 domain 2-like"/>
    <property type="match status" value="1"/>
</dbReference>
<dbReference type="SUPFAM" id="SSF50447">
    <property type="entry name" value="Translation proteins"/>
    <property type="match status" value="1"/>
</dbReference>
<dbReference type="PROSITE" id="PS00301">
    <property type="entry name" value="G_TR_1"/>
    <property type="match status" value="1"/>
</dbReference>
<dbReference type="PROSITE" id="PS51722">
    <property type="entry name" value="G_TR_2"/>
    <property type="match status" value="1"/>
</dbReference>
<protein>
    <recommendedName>
        <fullName evidence="1">Elongation factor G</fullName>
        <shortName evidence="1">EF-G</shortName>
    </recommendedName>
</protein>
<gene>
    <name evidence="1" type="primary">fusA</name>
    <name type="ordered locus">RBE_1160</name>
</gene>
<accession>Q1RHC3</accession>
<organism>
    <name type="scientific">Rickettsia bellii (strain RML369-C)</name>
    <dbReference type="NCBI Taxonomy" id="336407"/>
    <lineage>
        <taxon>Bacteria</taxon>
        <taxon>Pseudomonadati</taxon>
        <taxon>Pseudomonadota</taxon>
        <taxon>Alphaproteobacteria</taxon>
        <taxon>Rickettsiales</taxon>
        <taxon>Rickettsiaceae</taxon>
        <taxon>Rickettsieae</taxon>
        <taxon>Rickettsia</taxon>
        <taxon>belli group</taxon>
    </lineage>
</organism>
<sequence length="698" mass="77591">MSKKLENIRNIGICAHIDAGKTTTTERILYYTGKSHKIGEVHEGGATMDWMEQEQERGITITSAATTCRWQDKQINIIDTPGHVDFTIEVERSLRVLDGAVAVFDGVAGVEPQSETVWRQADKYNVPRMCFVNKMDRMGADFYRCVDMIKDRLGAKPLVIQLPIGIEENFKGVVDLVKMQAVVWKDESLGAEYSYQEIPDDMKAKAEEYRANLLDMVVELDDKIMEKYLSGEEVTEEEIKKLIRKGTISAAFYPVLCGSAFKNKGVQPLLDAVVDYLPSPIDIATVKGVEVSTGEEKDFPISVSEPFSALAFKIMNDPFVGSLTFIRVYSGKITSGTTVINTVKNKREKIGRMLLMHANNREDVKEASAGDIVALAGLKDTTTTGDTLSDEDKKVILERMEFPEPVIELAVEPKSKVDQEKMGLALSRLAAEDPSFRTSTDQETGQTVIKGMGELHLEIIIDRMRREFKVEANIGAPQVAYRETITKACEIDYTHKKQSGGAGQFARVKIIFEPLKDVKDLKEEDKNKSFIFESKIVGGAVPKEYIPGVEKGLNNIRETGVIAGYPMIDFKATLIDGAFHDVDSSVLAFEIAAKAAFREGMPKGNPKLLEPIMKVEVITPDEYMGDVIGDLNSRRGQVQGMEPRGNAQVIKAYVPLAEMFGYVNTLRSLSQGRAQYSMVFNHYDQVPTQVADTIKAKK</sequence>
<keyword id="KW-0963">Cytoplasm</keyword>
<keyword id="KW-0251">Elongation factor</keyword>
<keyword id="KW-0342">GTP-binding</keyword>
<keyword id="KW-0547">Nucleotide-binding</keyword>
<keyword id="KW-0648">Protein biosynthesis</keyword>
<comment type="function">
    <text evidence="1">Catalyzes the GTP-dependent ribosomal translocation step during translation elongation. During this step, the ribosome changes from the pre-translocational (PRE) to the post-translocational (POST) state as the newly formed A-site-bound peptidyl-tRNA and P-site-bound deacylated tRNA move to the P and E sites, respectively. Catalyzes the coordinated movement of the two tRNA molecules, the mRNA and conformational changes in the ribosome.</text>
</comment>
<comment type="subcellular location">
    <subcellularLocation>
        <location evidence="1">Cytoplasm</location>
    </subcellularLocation>
</comment>
<comment type="similarity">
    <text evidence="1">Belongs to the TRAFAC class translation factor GTPase superfamily. Classic translation factor GTPase family. EF-G/EF-2 subfamily.</text>
</comment>
<name>EFG_RICBR</name>